<keyword id="KW-0963">Cytoplasm</keyword>
<keyword id="KW-0251">Elongation factor</keyword>
<keyword id="KW-0342">GTP-binding</keyword>
<keyword id="KW-0378">Hydrolase</keyword>
<keyword id="KW-0460">Magnesium</keyword>
<keyword id="KW-0479">Metal-binding</keyword>
<keyword id="KW-0547">Nucleotide-binding</keyword>
<keyword id="KW-0648">Protein biosynthesis</keyword>
<keyword id="KW-1185">Reference proteome</keyword>
<reference key="1">
    <citation type="journal article" date="2009" name="J. Bacteriol.">
        <title>The complete genome sequence of Helicobacter pylori strain G27.</title>
        <authorList>
            <person name="Baltrus D.A."/>
            <person name="Amieva M.R."/>
            <person name="Covacci A."/>
            <person name="Lowe T.M."/>
            <person name="Merrell D.S."/>
            <person name="Ottemann K.M."/>
            <person name="Stein M."/>
            <person name="Salama N.R."/>
            <person name="Guillemin K."/>
        </authorList>
    </citation>
    <scope>NUCLEOTIDE SEQUENCE [LARGE SCALE GENOMIC DNA]</scope>
    <source>
        <strain>G27</strain>
    </source>
</reference>
<evidence type="ECO:0000250" key="1"/>
<evidence type="ECO:0000255" key="2">
    <source>
        <dbReference type="HAMAP-Rule" id="MF_00118"/>
    </source>
</evidence>
<protein>
    <recommendedName>
        <fullName evidence="2">Elongation factor Tu</fullName>
        <shortName evidence="2">EF-Tu</shortName>
        <ecNumber evidence="2">3.6.5.3</ecNumber>
    </recommendedName>
</protein>
<sequence length="399" mass="43636">MAKEKFNRTKPHVNIGTIGHVDHGKTTLSAAISAVLSLKGLAEMKDYDNIDNAPEEKERGITIATSHIEYETENRHYAHVDCPGHADYVKNMITGAAQMDGAILVVSAADGPMPQTREHILLSRQVGVPHIVVFLNKQDMVDDQELLELVEMEVRELLSAYEFPGDDTPIIAGSALRALEEAKAGNVGEWGEKVLKLMAEVDAYIPTPERDTEKTFLMPVEDVFSIAGRGTVVTGRIERGVVKVGDEVEIVGIRATQKTTVTGVEMFRKELEKGEAGDNVGVLLRGTKKEEVERGMVLCKPGSITPHKKFEGEIYVLSKEEGGRHTPFFTNYRPQFYVRTTDVTGSITLPEGVEMVMPGDNVKITVELISPVALELGTKFAIREGGRTVGAGVVSNIIE</sequence>
<feature type="chain" id="PRO_1000095066" description="Elongation factor Tu">
    <location>
        <begin position="1"/>
        <end position="399"/>
    </location>
</feature>
<feature type="domain" description="tr-type G">
    <location>
        <begin position="10"/>
        <end position="209"/>
    </location>
</feature>
<feature type="region of interest" description="G1" evidence="1">
    <location>
        <begin position="19"/>
        <end position="26"/>
    </location>
</feature>
<feature type="region of interest" description="G2" evidence="1">
    <location>
        <begin position="60"/>
        <end position="64"/>
    </location>
</feature>
<feature type="region of interest" description="G3" evidence="1">
    <location>
        <begin position="81"/>
        <end position="84"/>
    </location>
</feature>
<feature type="region of interest" description="G4" evidence="1">
    <location>
        <begin position="136"/>
        <end position="139"/>
    </location>
</feature>
<feature type="region of interest" description="G5" evidence="1">
    <location>
        <begin position="174"/>
        <end position="176"/>
    </location>
</feature>
<feature type="binding site" evidence="2">
    <location>
        <begin position="19"/>
        <end position="26"/>
    </location>
    <ligand>
        <name>GTP</name>
        <dbReference type="ChEBI" id="CHEBI:37565"/>
    </ligand>
</feature>
<feature type="binding site" evidence="2">
    <location>
        <position position="26"/>
    </location>
    <ligand>
        <name>Mg(2+)</name>
        <dbReference type="ChEBI" id="CHEBI:18420"/>
    </ligand>
</feature>
<feature type="binding site" evidence="2">
    <location>
        <begin position="81"/>
        <end position="85"/>
    </location>
    <ligand>
        <name>GTP</name>
        <dbReference type="ChEBI" id="CHEBI:37565"/>
    </ligand>
</feature>
<feature type="binding site" evidence="2">
    <location>
        <begin position="136"/>
        <end position="139"/>
    </location>
    <ligand>
        <name>GTP</name>
        <dbReference type="ChEBI" id="CHEBI:37565"/>
    </ligand>
</feature>
<name>EFTU_HELPG</name>
<comment type="function">
    <text evidence="2">GTP hydrolase that promotes the GTP-dependent binding of aminoacyl-tRNA to the A-site of ribosomes during protein biosynthesis.</text>
</comment>
<comment type="catalytic activity">
    <reaction evidence="2">
        <text>GTP + H2O = GDP + phosphate + H(+)</text>
        <dbReference type="Rhea" id="RHEA:19669"/>
        <dbReference type="ChEBI" id="CHEBI:15377"/>
        <dbReference type="ChEBI" id="CHEBI:15378"/>
        <dbReference type="ChEBI" id="CHEBI:37565"/>
        <dbReference type="ChEBI" id="CHEBI:43474"/>
        <dbReference type="ChEBI" id="CHEBI:58189"/>
        <dbReference type="EC" id="3.6.5.3"/>
    </reaction>
    <physiologicalReaction direction="left-to-right" evidence="2">
        <dbReference type="Rhea" id="RHEA:19670"/>
    </physiologicalReaction>
</comment>
<comment type="subunit">
    <text evidence="2">Monomer.</text>
</comment>
<comment type="subcellular location">
    <subcellularLocation>
        <location evidence="2">Cytoplasm</location>
    </subcellularLocation>
</comment>
<comment type="similarity">
    <text evidence="2">Belongs to the TRAFAC class translation factor GTPase superfamily. Classic translation factor GTPase family. EF-Tu/EF-1A subfamily.</text>
</comment>
<organism>
    <name type="scientific">Helicobacter pylori (strain G27)</name>
    <dbReference type="NCBI Taxonomy" id="563041"/>
    <lineage>
        <taxon>Bacteria</taxon>
        <taxon>Pseudomonadati</taxon>
        <taxon>Campylobacterota</taxon>
        <taxon>Epsilonproteobacteria</taxon>
        <taxon>Campylobacterales</taxon>
        <taxon>Helicobacteraceae</taxon>
        <taxon>Helicobacter</taxon>
    </lineage>
</organism>
<gene>
    <name evidence="2" type="primary">tuf</name>
    <name type="ordered locus">HPG27_1152</name>
</gene>
<proteinExistence type="inferred from homology"/>
<dbReference type="EC" id="3.6.5.3" evidence="2"/>
<dbReference type="EMBL" id="CP001173">
    <property type="protein sequence ID" value="ACI27902.1"/>
    <property type="molecule type" value="Genomic_DNA"/>
</dbReference>
<dbReference type="RefSeq" id="WP_001040572.1">
    <property type="nucleotide sequence ID" value="NC_011333.1"/>
</dbReference>
<dbReference type="SMR" id="B5Z8K3"/>
<dbReference type="GeneID" id="93237665"/>
<dbReference type="KEGG" id="hpg:HPG27_1152"/>
<dbReference type="HOGENOM" id="CLU_007265_0_1_7"/>
<dbReference type="Proteomes" id="UP000001735">
    <property type="component" value="Chromosome"/>
</dbReference>
<dbReference type="GO" id="GO:0005829">
    <property type="term" value="C:cytosol"/>
    <property type="evidence" value="ECO:0007669"/>
    <property type="project" value="TreeGrafter"/>
</dbReference>
<dbReference type="GO" id="GO:0005525">
    <property type="term" value="F:GTP binding"/>
    <property type="evidence" value="ECO:0007669"/>
    <property type="project" value="UniProtKB-UniRule"/>
</dbReference>
<dbReference type="GO" id="GO:0003924">
    <property type="term" value="F:GTPase activity"/>
    <property type="evidence" value="ECO:0007669"/>
    <property type="project" value="InterPro"/>
</dbReference>
<dbReference type="GO" id="GO:0003746">
    <property type="term" value="F:translation elongation factor activity"/>
    <property type="evidence" value="ECO:0007669"/>
    <property type="project" value="UniProtKB-UniRule"/>
</dbReference>
<dbReference type="CDD" id="cd01884">
    <property type="entry name" value="EF_Tu"/>
    <property type="match status" value="1"/>
</dbReference>
<dbReference type="CDD" id="cd03697">
    <property type="entry name" value="EFTU_II"/>
    <property type="match status" value="1"/>
</dbReference>
<dbReference type="CDD" id="cd03707">
    <property type="entry name" value="EFTU_III"/>
    <property type="match status" value="1"/>
</dbReference>
<dbReference type="FunFam" id="2.40.30.10:FF:000001">
    <property type="entry name" value="Elongation factor Tu"/>
    <property type="match status" value="1"/>
</dbReference>
<dbReference type="FunFam" id="3.40.50.300:FF:000003">
    <property type="entry name" value="Elongation factor Tu"/>
    <property type="match status" value="1"/>
</dbReference>
<dbReference type="Gene3D" id="3.40.50.300">
    <property type="entry name" value="P-loop containing nucleotide triphosphate hydrolases"/>
    <property type="match status" value="1"/>
</dbReference>
<dbReference type="Gene3D" id="2.40.30.10">
    <property type="entry name" value="Translation factors"/>
    <property type="match status" value="2"/>
</dbReference>
<dbReference type="HAMAP" id="MF_00118_B">
    <property type="entry name" value="EF_Tu_B"/>
    <property type="match status" value="1"/>
</dbReference>
<dbReference type="InterPro" id="IPR041709">
    <property type="entry name" value="EF-Tu_GTP-bd"/>
</dbReference>
<dbReference type="InterPro" id="IPR050055">
    <property type="entry name" value="EF-Tu_GTPase"/>
</dbReference>
<dbReference type="InterPro" id="IPR004161">
    <property type="entry name" value="EFTu-like_2"/>
</dbReference>
<dbReference type="InterPro" id="IPR033720">
    <property type="entry name" value="EFTU_2"/>
</dbReference>
<dbReference type="InterPro" id="IPR031157">
    <property type="entry name" value="G_TR_CS"/>
</dbReference>
<dbReference type="InterPro" id="IPR027417">
    <property type="entry name" value="P-loop_NTPase"/>
</dbReference>
<dbReference type="InterPro" id="IPR005225">
    <property type="entry name" value="Small_GTP-bd"/>
</dbReference>
<dbReference type="InterPro" id="IPR000795">
    <property type="entry name" value="T_Tr_GTP-bd_dom"/>
</dbReference>
<dbReference type="InterPro" id="IPR009000">
    <property type="entry name" value="Transl_B-barrel_sf"/>
</dbReference>
<dbReference type="InterPro" id="IPR009001">
    <property type="entry name" value="Transl_elong_EF1A/Init_IF2_C"/>
</dbReference>
<dbReference type="InterPro" id="IPR004541">
    <property type="entry name" value="Transl_elong_EFTu/EF1A_bac/org"/>
</dbReference>
<dbReference type="InterPro" id="IPR004160">
    <property type="entry name" value="Transl_elong_EFTu/EF1A_C"/>
</dbReference>
<dbReference type="NCBIfam" id="TIGR00485">
    <property type="entry name" value="EF-Tu"/>
    <property type="match status" value="1"/>
</dbReference>
<dbReference type="NCBIfam" id="NF000766">
    <property type="entry name" value="PRK00049.1"/>
    <property type="match status" value="1"/>
</dbReference>
<dbReference type="NCBIfam" id="NF009372">
    <property type="entry name" value="PRK12735.1"/>
    <property type="match status" value="1"/>
</dbReference>
<dbReference type="NCBIfam" id="NF009373">
    <property type="entry name" value="PRK12736.1"/>
    <property type="match status" value="1"/>
</dbReference>
<dbReference type="NCBIfam" id="TIGR00231">
    <property type="entry name" value="small_GTP"/>
    <property type="match status" value="1"/>
</dbReference>
<dbReference type="PANTHER" id="PTHR43721:SF22">
    <property type="entry name" value="ELONGATION FACTOR TU, MITOCHONDRIAL"/>
    <property type="match status" value="1"/>
</dbReference>
<dbReference type="PANTHER" id="PTHR43721">
    <property type="entry name" value="ELONGATION FACTOR TU-RELATED"/>
    <property type="match status" value="1"/>
</dbReference>
<dbReference type="Pfam" id="PF00009">
    <property type="entry name" value="GTP_EFTU"/>
    <property type="match status" value="1"/>
</dbReference>
<dbReference type="Pfam" id="PF03144">
    <property type="entry name" value="GTP_EFTU_D2"/>
    <property type="match status" value="1"/>
</dbReference>
<dbReference type="Pfam" id="PF03143">
    <property type="entry name" value="GTP_EFTU_D3"/>
    <property type="match status" value="1"/>
</dbReference>
<dbReference type="PRINTS" id="PR00315">
    <property type="entry name" value="ELONGATNFCT"/>
</dbReference>
<dbReference type="SUPFAM" id="SSF50465">
    <property type="entry name" value="EF-Tu/eEF-1alpha/eIF2-gamma C-terminal domain"/>
    <property type="match status" value="1"/>
</dbReference>
<dbReference type="SUPFAM" id="SSF52540">
    <property type="entry name" value="P-loop containing nucleoside triphosphate hydrolases"/>
    <property type="match status" value="1"/>
</dbReference>
<dbReference type="SUPFAM" id="SSF50447">
    <property type="entry name" value="Translation proteins"/>
    <property type="match status" value="1"/>
</dbReference>
<dbReference type="PROSITE" id="PS00301">
    <property type="entry name" value="G_TR_1"/>
    <property type="match status" value="1"/>
</dbReference>
<dbReference type="PROSITE" id="PS51722">
    <property type="entry name" value="G_TR_2"/>
    <property type="match status" value="1"/>
</dbReference>
<accession>B5Z8K3</accession>